<keyword id="KW-0067">ATP-binding</keyword>
<keyword id="KW-0963">Cytoplasm</keyword>
<keyword id="KW-0436">Ligase</keyword>
<keyword id="KW-0547">Nucleotide-binding</keyword>
<keyword id="KW-1185">Reference proteome</keyword>
<keyword id="KW-0819">tRNA processing</keyword>
<protein>
    <recommendedName>
        <fullName evidence="1">tRNA(Ile)-lysidine synthase</fullName>
        <ecNumber evidence="1">6.3.4.19</ecNumber>
    </recommendedName>
    <alternativeName>
        <fullName evidence="1">tRNA(Ile)-2-lysyl-cytidine synthase</fullName>
    </alternativeName>
    <alternativeName>
        <fullName evidence="1">tRNA(Ile)-lysidine synthetase</fullName>
    </alternativeName>
</protein>
<evidence type="ECO:0000255" key="1">
    <source>
        <dbReference type="HAMAP-Rule" id="MF_01161"/>
    </source>
</evidence>
<gene>
    <name evidence="1" type="primary">tilS</name>
    <name type="ordered locus">BLA_0472</name>
</gene>
<accession>B8DWC0</accession>
<sequence length="382" mass="41836">MAYSAAMKAAIGEMRDVLKAHGLGQQSKEFSAHGEHKPHDDAPFVFVACSGGRDSLALAACAQVVCAAWGIRCGAIIVDHHLQDASHKVAQQTAQTCRDLGLEPVLIVDVQVKERGQGIEAAAREARYAALVGTARRWHATAVLLAHTKDDQAESILIDLIRAAGTDAFAGMPQTQLFDDVLVLRPLLGITRAQTTRICEDEGLEYWDDPTNGDAVPLETALPASYPLRSRVRHDLMPYLSAFAGCDMVDRLARTARIARRDVEALNQEAERALAQTVEFEGNMRDLQADRLADDKLGANIDARALERWPEAIRYRVIARTLAACGLAYASRHVAAVDKLVSQWHGQGKVALPSKYSAKRKAHVIRICEDITHANRRCAKRN</sequence>
<name>TILS_BIFA0</name>
<dbReference type="EC" id="6.3.4.19" evidence="1"/>
<dbReference type="EMBL" id="CP001213">
    <property type="protein sequence ID" value="ACL28771.1"/>
    <property type="molecule type" value="Genomic_DNA"/>
</dbReference>
<dbReference type="RefSeq" id="WP_012619734.1">
    <property type="nucleotide sequence ID" value="NC_011835.1"/>
</dbReference>
<dbReference type="SMR" id="B8DWC0"/>
<dbReference type="STRING" id="442563.BLA_0472"/>
<dbReference type="GeneID" id="29695100"/>
<dbReference type="KEGG" id="bla:BLA_0472"/>
<dbReference type="HOGENOM" id="CLU_018869_1_0_11"/>
<dbReference type="Proteomes" id="UP000002456">
    <property type="component" value="Chromosome"/>
</dbReference>
<dbReference type="GO" id="GO:0005737">
    <property type="term" value="C:cytoplasm"/>
    <property type="evidence" value="ECO:0007669"/>
    <property type="project" value="UniProtKB-SubCell"/>
</dbReference>
<dbReference type="GO" id="GO:0005524">
    <property type="term" value="F:ATP binding"/>
    <property type="evidence" value="ECO:0007669"/>
    <property type="project" value="UniProtKB-UniRule"/>
</dbReference>
<dbReference type="GO" id="GO:0032267">
    <property type="term" value="F:tRNA(Ile)-lysidine synthase activity"/>
    <property type="evidence" value="ECO:0007669"/>
    <property type="project" value="UniProtKB-EC"/>
</dbReference>
<dbReference type="GO" id="GO:0006400">
    <property type="term" value="P:tRNA modification"/>
    <property type="evidence" value="ECO:0007669"/>
    <property type="project" value="UniProtKB-UniRule"/>
</dbReference>
<dbReference type="CDD" id="cd01992">
    <property type="entry name" value="TilS_N"/>
    <property type="match status" value="1"/>
</dbReference>
<dbReference type="Gene3D" id="1.20.59.20">
    <property type="match status" value="1"/>
</dbReference>
<dbReference type="Gene3D" id="3.40.50.620">
    <property type="entry name" value="HUPs"/>
    <property type="match status" value="1"/>
</dbReference>
<dbReference type="HAMAP" id="MF_01161">
    <property type="entry name" value="tRNA_Ile_lys_synt"/>
    <property type="match status" value="1"/>
</dbReference>
<dbReference type="InterPro" id="IPR014729">
    <property type="entry name" value="Rossmann-like_a/b/a_fold"/>
</dbReference>
<dbReference type="InterPro" id="IPR011063">
    <property type="entry name" value="TilS/TtcA_N"/>
</dbReference>
<dbReference type="InterPro" id="IPR012094">
    <property type="entry name" value="tRNA_Ile_lys_synt"/>
</dbReference>
<dbReference type="InterPro" id="IPR012795">
    <property type="entry name" value="tRNA_Ile_lys_synt_N"/>
</dbReference>
<dbReference type="InterPro" id="IPR015262">
    <property type="entry name" value="tRNA_Ile_lys_synt_subst-bd"/>
</dbReference>
<dbReference type="NCBIfam" id="TIGR02432">
    <property type="entry name" value="lysidine_TilS_N"/>
    <property type="match status" value="1"/>
</dbReference>
<dbReference type="PANTHER" id="PTHR43033">
    <property type="entry name" value="TRNA(ILE)-LYSIDINE SYNTHASE-RELATED"/>
    <property type="match status" value="1"/>
</dbReference>
<dbReference type="PANTHER" id="PTHR43033:SF1">
    <property type="entry name" value="TRNA(ILE)-LYSIDINE SYNTHASE-RELATED"/>
    <property type="match status" value="1"/>
</dbReference>
<dbReference type="Pfam" id="PF01171">
    <property type="entry name" value="ATP_bind_3"/>
    <property type="match status" value="1"/>
</dbReference>
<dbReference type="Pfam" id="PF09179">
    <property type="entry name" value="TilS"/>
    <property type="match status" value="1"/>
</dbReference>
<dbReference type="SUPFAM" id="SSF52402">
    <property type="entry name" value="Adenine nucleotide alpha hydrolases-like"/>
    <property type="match status" value="1"/>
</dbReference>
<dbReference type="SUPFAM" id="SSF82829">
    <property type="entry name" value="MesJ substrate recognition domain-like"/>
    <property type="match status" value="1"/>
</dbReference>
<reference key="1">
    <citation type="journal article" date="2009" name="J. Bacteriol.">
        <title>Genome sequence of the probiotic bacterium Bifidobacterium animalis subsp. lactis AD011.</title>
        <authorList>
            <person name="Kim J.F."/>
            <person name="Jeong H."/>
            <person name="Yu D.S."/>
            <person name="Choi S.-H."/>
            <person name="Hur C.-G."/>
            <person name="Park M.-S."/>
            <person name="Yoon S.H."/>
            <person name="Kim D.-W."/>
            <person name="Ji G.E."/>
            <person name="Park H.-S."/>
            <person name="Oh T.K."/>
        </authorList>
    </citation>
    <scope>NUCLEOTIDE SEQUENCE [LARGE SCALE GENOMIC DNA]</scope>
    <source>
        <strain>AD011</strain>
    </source>
</reference>
<organism>
    <name type="scientific">Bifidobacterium animalis subsp. lactis (strain AD011)</name>
    <dbReference type="NCBI Taxonomy" id="442563"/>
    <lineage>
        <taxon>Bacteria</taxon>
        <taxon>Bacillati</taxon>
        <taxon>Actinomycetota</taxon>
        <taxon>Actinomycetes</taxon>
        <taxon>Bifidobacteriales</taxon>
        <taxon>Bifidobacteriaceae</taxon>
        <taxon>Bifidobacterium</taxon>
    </lineage>
</organism>
<feature type="chain" id="PRO_1000164316" description="tRNA(Ile)-lysidine synthase">
    <location>
        <begin position="1"/>
        <end position="382"/>
    </location>
</feature>
<feature type="binding site" evidence="1">
    <location>
        <begin position="50"/>
        <end position="55"/>
    </location>
    <ligand>
        <name>ATP</name>
        <dbReference type="ChEBI" id="CHEBI:30616"/>
    </ligand>
</feature>
<proteinExistence type="inferred from homology"/>
<comment type="function">
    <text evidence="1">Ligates lysine onto the cytidine present at position 34 of the AUA codon-specific tRNA(Ile) that contains the anticodon CAU, in an ATP-dependent manner. Cytidine is converted to lysidine, thus changing the amino acid specificity of the tRNA from methionine to isoleucine.</text>
</comment>
<comment type="catalytic activity">
    <reaction evidence="1">
        <text>cytidine(34) in tRNA(Ile2) + L-lysine + ATP = lysidine(34) in tRNA(Ile2) + AMP + diphosphate + H(+)</text>
        <dbReference type="Rhea" id="RHEA:43744"/>
        <dbReference type="Rhea" id="RHEA-COMP:10625"/>
        <dbReference type="Rhea" id="RHEA-COMP:10670"/>
        <dbReference type="ChEBI" id="CHEBI:15378"/>
        <dbReference type="ChEBI" id="CHEBI:30616"/>
        <dbReference type="ChEBI" id="CHEBI:32551"/>
        <dbReference type="ChEBI" id="CHEBI:33019"/>
        <dbReference type="ChEBI" id="CHEBI:82748"/>
        <dbReference type="ChEBI" id="CHEBI:83665"/>
        <dbReference type="ChEBI" id="CHEBI:456215"/>
        <dbReference type="EC" id="6.3.4.19"/>
    </reaction>
</comment>
<comment type="subcellular location">
    <subcellularLocation>
        <location evidence="1">Cytoplasm</location>
    </subcellularLocation>
</comment>
<comment type="domain">
    <text>The N-terminal region contains the highly conserved SGGXDS motif, predicted to be a P-loop motif involved in ATP binding.</text>
</comment>
<comment type="similarity">
    <text evidence="1">Belongs to the tRNA(Ile)-lysidine synthase family.</text>
</comment>